<dbReference type="EC" id="1.17.7.3" evidence="1"/>
<dbReference type="EMBL" id="CP000020">
    <property type="protein sequence ID" value="AAW85124.1"/>
    <property type="molecule type" value="Genomic_DNA"/>
</dbReference>
<dbReference type="RefSeq" id="WP_011261366.1">
    <property type="nucleotide sequence ID" value="NC_006840.2"/>
</dbReference>
<dbReference type="RefSeq" id="YP_204012.1">
    <property type="nucleotide sequence ID" value="NC_006840.2"/>
</dbReference>
<dbReference type="SMR" id="Q5E772"/>
<dbReference type="STRING" id="312309.VF_0629"/>
<dbReference type="EnsemblBacteria" id="AAW85124">
    <property type="protein sequence ID" value="AAW85124"/>
    <property type="gene ID" value="VF_0629"/>
</dbReference>
<dbReference type="GeneID" id="54163282"/>
<dbReference type="KEGG" id="vfi:VF_0629"/>
<dbReference type="PATRIC" id="fig|312309.11.peg.621"/>
<dbReference type="eggNOG" id="COG0821">
    <property type="taxonomic scope" value="Bacteria"/>
</dbReference>
<dbReference type="HOGENOM" id="CLU_042258_0_0_6"/>
<dbReference type="OrthoDB" id="9803214at2"/>
<dbReference type="UniPathway" id="UPA00056">
    <property type="reaction ID" value="UER00096"/>
</dbReference>
<dbReference type="Proteomes" id="UP000000537">
    <property type="component" value="Chromosome I"/>
</dbReference>
<dbReference type="GO" id="GO:0051539">
    <property type="term" value="F:4 iron, 4 sulfur cluster binding"/>
    <property type="evidence" value="ECO:0007669"/>
    <property type="project" value="UniProtKB-UniRule"/>
</dbReference>
<dbReference type="GO" id="GO:0046429">
    <property type="term" value="F:4-hydroxy-3-methylbut-2-en-1-yl diphosphate synthase activity (ferredoxin)"/>
    <property type="evidence" value="ECO:0007669"/>
    <property type="project" value="UniProtKB-UniRule"/>
</dbReference>
<dbReference type="GO" id="GO:0141197">
    <property type="term" value="F:4-hydroxy-3-methylbut-2-enyl-diphosphate synthase activity (flavodoxin)"/>
    <property type="evidence" value="ECO:0007669"/>
    <property type="project" value="UniProtKB-EC"/>
</dbReference>
<dbReference type="GO" id="GO:0005506">
    <property type="term" value="F:iron ion binding"/>
    <property type="evidence" value="ECO:0007669"/>
    <property type="project" value="InterPro"/>
</dbReference>
<dbReference type="GO" id="GO:0019288">
    <property type="term" value="P:isopentenyl diphosphate biosynthetic process, methylerythritol 4-phosphate pathway"/>
    <property type="evidence" value="ECO:0007669"/>
    <property type="project" value="UniProtKB-UniRule"/>
</dbReference>
<dbReference type="GO" id="GO:0016114">
    <property type="term" value="P:terpenoid biosynthetic process"/>
    <property type="evidence" value="ECO:0007669"/>
    <property type="project" value="InterPro"/>
</dbReference>
<dbReference type="FunFam" id="3.20.20.20:FF:000001">
    <property type="entry name" value="4-hydroxy-3-methylbut-2-en-1-yl diphosphate synthase (flavodoxin)"/>
    <property type="match status" value="1"/>
</dbReference>
<dbReference type="FunFam" id="3.30.413.10:FF:000002">
    <property type="entry name" value="4-hydroxy-3-methylbut-2-en-1-yl diphosphate synthase (flavodoxin)"/>
    <property type="match status" value="1"/>
</dbReference>
<dbReference type="Gene3D" id="3.20.20.20">
    <property type="entry name" value="Dihydropteroate synthase-like"/>
    <property type="match status" value="1"/>
</dbReference>
<dbReference type="Gene3D" id="3.30.413.10">
    <property type="entry name" value="Sulfite Reductase Hemoprotein, domain 1"/>
    <property type="match status" value="1"/>
</dbReference>
<dbReference type="HAMAP" id="MF_00159">
    <property type="entry name" value="IspG"/>
    <property type="match status" value="1"/>
</dbReference>
<dbReference type="InterPro" id="IPR011005">
    <property type="entry name" value="Dihydropteroate_synth-like_sf"/>
</dbReference>
<dbReference type="InterPro" id="IPR016425">
    <property type="entry name" value="IspG_bac"/>
</dbReference>
<dbReference type="InterPro" id="IPR004588">
    <property type="entry name" value="IspG_bac-typ"/>
</dbReference>
<dbReference type="InterPro" id="IPR045854">
    <property type="entry name" value="NO2/SO3_Rdtase_4Fe4S_sf"/>
</dbReference>
<dbReference type="NCBIfam" id="TIGR00612">
    <property type="entry name" value="ispG_gcpE"/>
    <property type="match status" value="1"/>
</dbReference>
<dbReference type="NCBIfam" id="NF001540">
    <property type="entry name" value="PRK00366.1"/>
    <property type="match status" value="1"/>
</dbReference>
<dbReference type="PANTHER" id="PTHR30454">
    <property type="entry name" value="4-HYDROXY-3-METHYLBUT-2-EN-1-YL DIPHOSPHATE SYNTHASE"/>
    <property type="match status" value="1"/>
</dbReference>
<dbReference type="PANTHER" id="PTHR30454:SF0">
    <property type="entry name" value="4-HYDROXY-3-METHYLBUT-2-EN-1-YL DIPHOSPHATE SYNTHASE (FERREDOXIN), CHLOROPLASTIC"/>
    <property type="match status" value="1"/>
</dbReference>
<dbReference type="Pfam" id="PF04551">
    <property type="entry name" value="GcpE"/>
    <property type="match status" value="1"/>
</dbReference>
<dbReference type="PIRSF" id="PIRSF004640">
    <property type="entry name" value="IspG"/>
    <property type="match status" value="1"/>
</dbReference>
<dbReference type="SUPFAM" id="SSF51717">
    <property type="entry name" value="Dihydropteroate synthetase-like"/>
    <property type="match status" value="1"/>
</dbReference>
<dbReference type="SUPFAM" id="SSF56014">
    <property type="entry name" value="Nitrite and sulphite reductase 4Fe-4S domain-like"/>
    <property type="match status" value="1"/>
</dbReference>
<keyword id="KW-0004">4Fe-4S</keyword>
<keyword id="KW-0408">Iron</keyword>
<keyword id="KW-0411">Iron-sulfur</keyword>
<keyword id="KW-0414">Isoprene biosynthesis</keyword>
<keyword id="KW-0479">Metal-binding</keyword>
<keyword id="KW-0560">Oxidoreductase</keyword>
<keyword id="KW-1185">Reference proteome</keyword>
<proteinExistence type="inferred from homology"/>
<accession>Q5E772</accession>
<comment type="function">
    <text evidence="1">Converts 2C-methyl-D-erythritol 2,4-cyclodiphosphate (ME-2,4cPP) into 1-hydroxy-2-methyl-2-(E)-butenyl 4-diphosphate.</text>
</comment>
<comment type="catalytic activity">
    <reaction evidence="1">
        <text>(2E)-4-hydroxy-3-methylbut-2-enyl diphosphate + oxidized [flavodoxin] + H2O + 2 H(+) = 2-C-methyl-D-erythritol 2,4-cyclic diphosphate + reduced [flavodoxin]</text>
        <dbReference type="Rhea" id="RHEA:43604"/>
        <dbReference type="Rhea" id="RHEA-COMP:10622"/>
        <dbReference type="Rhea" id="RHEA-COMP:10623"/>
        <dbReference type="ChEBI" id="CHEBI:15377"/>
        <dbReference type="ChEBI" id="CHEBI:15378"/>
        <dbReference type="ChEBI" id="CHEBI:57618"/>
        <dbReference type="ChEBI" id="CHEBI:58210"/>
        <dbReference type="ChEBI" id="CHEBI:58483"/>
        <dbReference type="ChEBI" id="CHEBI:128753"/>
        <dbReference type="EC" id="1.17.7.3"/>
    </reaction>
</comment>
<comment type="cofactor">
    <cofactor evidence="1">
        <name>[4Fe-4S] cluster</name>
        <dbReference type="ChEBI" id="CHEBI:49883"/>
    </cofactor>
    <text evidence="1">Binds 1 [4Fe-4S] cluster.</text>
</comment>
<comment type="pathway">
    <text evidence="1">Isoprenoid biosynthesis; isopentenyl diphosphate biosynthesis via DXP pathway; isopentenyl diphosphate from 1-deoxy-D-xylulose 5-phosphate: step 5/6.</text>
</comment>
<comment type="similarity">
    <text evidence="1">Belongs to the IspG family.</text>
</comment>
<gene>
    <name evidence="1" type="primary">ispG</name>
    <name type="ordered locus">VF_0629</name>
</gene>
<organism>
    <name type="scientific">Aliivibrio fischeri (strain ATCC 700601 / ES114)</name>
    <name type="common">Vibrio fischeri</name>
    <dbReference type="NCBI Taxonomy" id="312309"/>
    <lineage>
        <taxon>Bacteria</taxon>
        <taxon>Pseudomonadati</taxon>
        <taxon>Pseudomonadota</taxon>
        <taxon>Gammaproteobacteria</taxon>
        <taxon>Vibrionales</taxon>
        <taxon>Vibrionaceae</taxon>
        <taxon>Aliivibrio</taxon>
    </lineage>
</organism>
<feature type="chain" id="PRO_0000190652" description="4-hydroxy-3-methylbut-2-en-1-yl diphosphate synthase (flavodoxin)">
    <location>
        <begin position="1"/>
        <end position="372"/>
    </location>
</feature>
<feature type="binding site" evidence="1">
    <location>
        <position position="270"/>
    </location>
    <ligand>
        <name>[4Fe-4S] cluster</name>
        <dbReference type="ChEBI" id="CHEBI:49883"/>
    </ligand>
</feature>
<feature type="binding site" evidence="1">
    <location>
        <position position="273"/>
    </location>
    <ligand>
        <name>[4Fe-4S] cluster</name>
        <dbReference type="ChEBI" id="CHEBI:49883"/>
    </ligand>
</feature>
<feature type="binding site" evidence="1">
    <location>
        <position position="305"/>
    </location>
    <ligand>
        <name>[4Fe-4S] cluster</name>
        <dbReference type="ChEBI" id="CHEBI:49883"/>
    </ligand>
</feature>
<feature type="binding site" evidence="1">
    <location>
        <position position="312"/>
    </location>
    <ligand>
        <name>[4Fe-4S] cluster</name>
        <dbReference type="ChEBI" id="CHEBI:49883"/>
    </ligand>
</feature>
<sequence length="372" mass="40590">MHIESPIKRRQSTRIYVGNVPIGDGAPIAVQSMTNTRTTDVDATVAQIKSLEKVGADIVRVSVPTMDAAEAFKVIKQQVSVPLVADIHFDYRIALQVAEYGVDCLRINPGNIGNEQRIRSVVDCARDKNIPIRIGVNGGSLEKDIQAKYKEPTAEALLESAMRHVDILDRLNFDQFKVSVKASDVFLAVDSYRLLAKQIAQPLHLGITEAGGARAGSVKSAVGLGMLLSEGIGDTLRISLAADPVEEIKVGFDILKSLRIRSRGINFIACPTCSRQEFDVIATVNELEQRLEDLITPMDVSLIGCVVNGPGEAEVSHMGIAGSNRKSAFYEDGVRQKERFDNDNIVDQLEAKIRAKAATLSKENQIDINQID</sequence>
<protein>
    <recommendedName>
        <fullName evidence="1">4-hydroxy-3-methylbut-2-en-1-yl diphosphate synthase (flavodoxin)</fullName>
        <ecNumber evidence="1">1.17.7.3</ecNumber>
    </recommendedName>
    <alternativeName>
        <fullName evidence="1">1-hydroxy-2-methyl-2-(E)-butenyl 4-diphosphate synthase</fullName>
    </alternativeName>
</protein>
<evidence type="ECO:0000255" key="1">
    <source>
        <dbReference type="HAMAP-Rule" id="MF_00159"/>
    </source>
</evidence>
<reference key="1">
    <citation type="journal article" date="2005" name="Proc. Natl. Acad. Sci. U.S.A.">
        <title>Complete genome sequence of Vibrio fischeri: a symbiotic bacterium with pathogenic congeners.</title>
        <authorList>
            <person name="Ruby E.G."/>
            <person name="Urbanowski M."/>
            <person name="Campbell J."/>
            <person name="Dunn A."/>
            <person name="Faini M."/>
            <person name="Gunsalus R."/>
            <person name="Lostroh P."/>
            <person name="Lupp C."/>
            <person name="McCann J."/>
            <person name="Millikan D."/>
            <person name="Schaefer A."/>
            <person name="Stabb E."/>
            <person name="Stevens A."/>
            <person name="Visick K."/>
            <person name="Whistler C."/>
            <person name="Greenberg E.P."/>
        </authorList>
    </citation>
    <scope>NUCLEOTIDE SEQUENCE [LARGE SCALE GENOMIC DNA]</scope>
    <source>
        <strain>ATCC 700601 / ES114</strain>
    </source>
</reference>
<name>ISPG_ALIF1</name>